<gene>
    <name evidence="1" type="primary">rnfB</name>
    <name type="ordered locus">PM0386</name>
</gene>
<name>RNFB_PASMU</name>
<feature type="chain" id="PRO_0000216275" description="Ion-translocating oxidoreductase complex subunit B">
    <location>
        <begin position="1"/>
        <end position="198"/>
    </location>
</feature>
<feature type="domain" description="4Fe-4S" evidence="1">
    <location>
        <begin position="34"/>
        <end position="92"/>
    </location>
</feature>
<feature type="domain" description="4Fe-4S ferredoxin-type 1" evidence="1">
    <location>
        <begin position="106"/>
        <end position="135"/>
    </location>
</feature>
<feature type="domain" description="4Fe-4S ferredoxin-type 2" evidence="1">
    <location>
        <begin position="136"/>
        <end position="165"/>
    </location>
</feature>
<feature type="region of interest" description="Hydrophobic" evidence="1">
    <location>
        <begin position="1"/>
        <end position="28"/>
    </location>
</feature>
<feature type="binding site" evidence="1">
    <location>
        <position position="51"/>
    </location>
    <ligand>
        <name>[4Fe-4S] cluster</name>
        <dbReference type="ChEBI" id="CHEBI:49883"/>
        <label>1</label>
    </ligand>
</feature>
<feature type="binding site" evidence="1">
    <location>
        <position position="54"/>
    </location>
    <ligand>
        <name>[4Fe-4S] cluster</name>
        <dbReference type="ChEBI" id="CHEBI:49883"/>
        <label>1</label>
    </ligand>
</feature>
<feature type="binding site" evidence="1">
    <location>
        <position position="59"/>
    </location>
    <ligand>
        <name>[4Fe-4S] cluster</name>
        <dbReference type="ChEBI" id="CHEBI:49883"/>
        <label>1</label>
    </ligand>
</feature>
<feature type="binding site" evidence="1">
    <location>
        <position position="75"/>
    </location>
    <ligand>
        <name>[4Fe-4S] cluster</name>
        <dbReference type="ChEBI" id="CHEBI:49883"/>
        <label>1</label>
    </ligand>
</feature>
<feature type="binding site" evidence="1">
    <location>
        <position position="115"/>
    </location>
    <ligand>
        <name>[4Fe-4S] cluster</name>
        <dbReference type="ChEBI" id="CHEBI:49883"/>
        <label>2</label>
    </ligand>
</feature>
<feature type="binding site" evidence="1">
    <location>
        <position position="118"/>
    </location>
    <ligand>
        <name>[4Fe-4S] cluster</name>
        <dbReference type="ChEBI" id="CHEBI:49883"/>
        <label>2</label>
    </ligand>
</feature>
<feature type="binding site" evidence="1">
    <location>
        <position position="121"/>
    </location>
    <ligand>
        <name>[4Fe-4S] cluster</name>
        <dbReference type="ChEBI" id="CHEBI:49883"/>
        <label>2</label>
    </ligand>
</feature>
<feature type="binding site" evidence="1">
    <location>
        <position position="125"/>
    </location>
    <ligand>
        <name>[4Fe-4S] cluster</name>
        <dbReference type="ChEBI" id="CHEBI:49883"/>
        <label>3</label>
    </ligand>
</feature>
<feature type="binding site" evidence="1">
    <location>
        <position position="145"/>
    </location>
    <ligand>
        <name>[4Fe-4S] cluster</name>
        <dbReference type="ChEBI" id="CHEBI:49883"/>
        <label>3</label>
    </ligand>
</feature>
<feature type="binding site" evidence="1">
    <location>
        <position position="148"/>
    </location>
    <ligand>
        <name>[4Fe-4S] cluster</name>
        <dbReference type="ChEBI" id="CHEBI:49883"/>
        <label>3</label>
    </ligand>
</feature>
<feature type="binding site" evidence="1">
    <location>
        <position position="151"/>
    </location>
    <ligand>
        <name>[4Fe-4S] cluster</name>
        <dbReference type="ChEBI" id="CHEBI:49883"/>
        <label>3</label>
    </ligand>
</feature>
<feature type="binding site" evidence="1">
    <location>
        <position position="155"/>
    </location>
    <ligand>
        <name>[4Fe-4S] cluster</name>
        <dbReference type="ChEBI" id="CHEBI:49883"/>
        <label>2</label>
    </ligand>
</feature>
<proteinExistence type="inferred from homology"/>
<keyword id="KW-0004">4Fe-4S</keyword>
<keyword id="KW-0997">Cell inner membrane</keyword>
<keyword id="KW-1003">Cell membrane</keyword>
<keyword id="KW-0249">Electron transport</keyword>
<keyword id="KW-0408">Iron</keyword>
<keyword id="KW-0411">Iron-sulfur</keyword>
<keyword id="KW-0472">Membrane</keyword>
<keyword id="KW-0479">Metal-binding</keyword>
<keyword id="KW-1185">Reference proteome</keyword>
<keyword id="KW-0677">Repeat</keyword>
<keyword id="KW-1278">Translocase</keyword>
<keyword id="KW-0813">Transport</keyword>
<dbReference type="EC" id="7.-.-.-" evidence="1"/>
<dbReference type="EMBL" id="AE004439">
    <property type="protein sequence ID" value="AAK02470.1"/>
    <property type="molecule type" value="Genomic_DNA"/>
</dbReference>
<dbReference type="STRING" id="272843.PM0386"/>
<dbReference type="EnsemblBacteria" id="AAK02470">
    <property type="protein sequence ID" value="AAK02470"/>
    <property type="gene ID" value="PM0386"/>
</dbReference>
<dbReference type="KEGG" id="pmu:PM0386"/>
<dbReference type="PATRIC" id="fig|272843.6.peg.399"/>
<dbReference type="HOGENOM" id="CLU_063448_2_0_6"/>
<dbReference type="OrthoDB" id="9789936at2"/>
<dbReference type="Proteomes" id="UP000000809">
    <property type="component" value="Chromosome"/>
</dbReference>
<dbReference type="GO" id="GO:0005886">
    <property type="term" value="C:plasma membrane"/>
    <property type="evidence" value="ECO:0007669"/>
    <property type="project" value="UniProtKB-SubCell"/>
</dbReference>
<dbReference type="GO" id="GO:0051539">
    <property type="term" value="F:4 iron, 4 sulfur cluster binding"/>
    <property type="evidence" value="ECO:0007669"/>
    <property type="project" value="UniProtKB-UniRule"/>
</dbReference>
<dbReference type="GO" id="GO:0009055">
    <property type="term" value="F:electron transfer activity"/>
    <property type="evidence" value="ECO:0007669"/>
    <property type="project" value="InterPro"/>
</dbReference>
<dbReference type="GO" id="GO:0046872">
    <property type="term" value="F:metal ion binding"/>
    <property type="evidence" value="ECO:0007669"/>
    <property type="project" value="UniProtKB-KW"/>
</dbReference>
<dbReference type="GO" id="GO:0022900">
    <property type="term" value="P:electron transport chain"/>
    <property type="evidence" value="ECO:0007669"/>
    <property type="project" value="UniProtKB-UniRule"/>
</dbReference>
<dbReference type="FunFam" id="1.10.15.40:FF:000001">
    <property type="entry name" value="Ion-translocating oxidoreductase complex subunit B"/>
    <property type="match status" value="1"/>
</dbReference>
<dbReference type="Gene3D" id="3.30.70.20">
    <property type="match status" value="1"/>
</dbReference>
<dbReference type="Gene3D" id="1.10.15.40">
    <property type="entry name" value="Electron transport complex subunit B, putative Fe-S cluster"/>
    <property type="match status" value="1"/>
</dbReference>
<dbReference type="HAMAP" id="MF_00463">
    <property type="entry name" value="RsxB_RnfB"/>
    <property type="match status" value="1"/>
</dbReference>
<dbReference type="InterPro" id="IPR007202">
    <property type="entry name" value="4Fe-4S_dom"/>
</dbReference>
<dbReference type="InterPro" id="IPR017896">
    <property type="entry name" value="4Fe4S_Fe-S-bd"/>
</dbReference>
<dbReference type="InterPro" id="IPR017900">
    <property type="entry name" value="4Fe4S_Fe_S_CS"/>
</dbReference>
<dbReference type="InterPro" id="IPR010207">
    <property type="entry name" value="Elect_transpt_cplx_RnfB/RsxB"/>
</dbReference>
<dbReference type="InterPro" id="IPR016463">
    <property type="entry name" value="RnfB/RsxB_Proteobac"/>
</dbReference>
<dbReference type="InterPro" id="IPR050294">
    <property type="entry name" value="RnfB_subfamily"/>
</dbReference>
<dbReference type="NCBIfam" id="NF003475">
    <property type="entry name" value="PRK05113.1"/>
    <property type="match status" value="1"/>
</dbReference>
<dbReference type="NCBIfam" id="TIGR01944">
    <property type="entry name" value="rnfB"/>
    <property type="match status" value="1"/>
</dbReference>
<dbReference type="PANTHER" id="PTHR42859:SF3">
    <property type="entry name" value="ION-TRANSLOCATING OXIDOREDUCTASE COMPLEX SUBUNIT B"/>
    <property type="match status" value="1"/>
</dbReference>
<dbReference type="PANTHER" id="PTHR42859">
    <property type="entry name" value="OXIDOREDUCTASE"/>
    <property type="match status" value="1"/>
</dbReference>
<dbReference type="Pfam" id="PF14697">
    <property type="entry name" value="Fer4_21"/>
    <property type="match status" value="1"/>
</dbReference>
<dbReference type="Pfam" id="PF04060">
    <property type="entry name" value="FeS"/>
    <property type="match status" value="1"/>
</dbReference>
<dbReference type="PIRSF" id="PIRSF005784">
    <property type="entry name" value="Elect_transpt_RnfB"/>
    <property type="match status" value="1"/>
</dbReference>
<dbReference type="SUPFAM" id="SSF54862">
    <property type="entry name" value="4Fe-4S ferredoxins"/>
    <property type="match status" value="1"/>
</dbReference>
<dbReference type="PROSITE" id="PS51656">
    <property type="entry name" value="4FE4S"/>
    <property type="match status" value="1"/>
</dbReference>
<dbReference type="PROSITE" id="PS00198">
    <property type="entry name" value="4FE4S_FER_1"/>
    <property type="match status" value="2"/>
</dbReference>
<dbReference type="PROSITE" id="PS51379">
    <property type="entry name" value="4FE4S_FER_2"/>
    <property type="match status" value="2"/>
</dbReference>
<sequence>MIITTVYFILVAIAVLALIFGAILGFASVKLKVEADPIVEKIDALLPQSQCGQCGYPGCKPYAEAIANGDDITKCIPGGQTVIVNIAELMGVEPPTTDIEGDPAPMVAFIDEDMCIGCTKCIQACPVDAIIGTNKAMHTIIPDLCTGCELCVPPCPTDCISMIKVESTIHNWNWKFDPKLVIPIVDTTTTQKKLIKGE</sequence>
<reference key="1">
    <citation type="journal article" date="2001" name="Proc. Natl. Acad. Sci. U.S.A.">
        <title>Complete genomic sequence of Pasteurella multocida Pm70.</title>
        <authorList>
            <person name="May B.J."/>
            <person name="Zhang Q."/>
            <person name="Li L.L."/>
            <person name="Paustian M.L."/>
            <person name="Whittam T.S."/>
            <person name="Kapur V."/>
        </authorList>
    </citation>
    <scope>NUCLEOTIDE SEQUENCE [LARGE SCALE GENOMIC DNA]</scope>
    <source>
        <strain>Pm70</strain>
    </source>
</reference>
<protein>
    <recommendedName>
        <fullName evidence="1">Ion-translocating oxidoreductase complex subunit B</fullName>
        <ecNumber evidence="1">7.-.-.-</ecNumber>
    </recommendedName>
    <alternativeName>
        <fullName evidence="1">Rnf electron transport complex subunit B</fullName>
    </alternativeName>
</protein>
<accession>Q9CNP1</accession>
<comment type="function">
    <text evidence="1">Part of a membrane-bound complex that couples electron transfer with translocation of ions across the membrane.</text>
</comment>
<comment type="cofactor">
    <cofactor evidence="1">
        <name>[4Fe-4S] cluster</name>
        <dbReference type="ChEBI" id="CHEBI:49883"/>
    </cofactor>
    <text evidence="1">Binds 3 [4Fe-4S] clusters.</text>
</comment>
<comment type="subunit">
    <text evidence="1">The complex is composed of six subunits: RnfA, RnfB, RnfC, RnfD, RnfE and RnfG.</text>
</comment>
<comment type="subcellular location">
    <subcellularLocation>
        <location evidence="1">Cell inner membrane</location>
    </subcellularLocation>
</comment>
<comment type="similarity">
    <text evidence="1">Belongs to the 4Fe4S bacterial-type ferredoxin family. RnfB subfamily.</text>
</comment>
<organism>
    <name type="scientific">Pasteurella multocida (strain Pm70)</name>
    <dbReference type="NCBI Taxonomy" id="272843"/>
    <lineage>
        <taxon>Bacteria</taxon>
        <taxon>Pseudomonadati</taxon>
        <taxon>Pseudomonadota</taxon>
        <taxon>Gammaproteobacteria</taxon>
        <taxon>Pasteurellales</taxon>
        <taxon>Pasteurellaceae</taxon>
        <taxon>Pasteurella</taxon>
    </lineage>
</organism>
<evidence type="ECO:0000255" key="1">
    <source>
        <dbReference type="HAMAP-Rule" id="MF_00463"/>
    </source>
</evidence>